<evidence type="ECO:0000255" key="1">
    <source>
        <dbReference type="HAMAP-Rule" id="MF_00685"/>
    </source>
</evidence>
<dbReference type="EC" id="2.4.1.18" evidence="1"/>
<dbReference type="EMBL" id="CP000095">
    <property type="protein sequence ID" value="AAZ57512.1"/>
    <property type="molecule type" value="Genomic_DNA"/>
</dbReference>
<dbReference type="RefSeq" id="WP_011293554.1">
    <property type="nucleotide sequence ID" value="NC_007335.2"/>
</dbReference>
<dbReference type="SMR" id="Q46LW6"/>
<dbReference type="STRING" id="59920.PMN2A_0020"/>
<dbReference type="CAZy" id="CBM48">
    <property type="family name" value="Carbohydrate-Binding Module Family 48"/>
</dbReference>
<dbReference type="CAZy" id="GH13">
    <property type="family name" value="Glycoside Hydrolase Family 13"/>
</dbReference>
<dbReference type="KEGG" id="pmn:PMN2A_0020"/>
<dbReference type="HOGENOM" id="CLU_004245_3_2_3"/>
<dbReference type="OrthoDB" id="9800174at2"/>
<dbReference type="PhylomeDB" id="Q46LW6"/>
<dbReference type="UniPathway" id="UPA00164"/>
<dbReference type="Proteomes" id="UP000002535">
    <property type="component" value="Chromosome"/>
</dbReference>
<dbReference type="GO" id="GO:0005829">
    <property type="term" value="C:cytosol"/>
    <property type="evidence" value="ECO:0007669"/>
    <property type="project" value="TreeGrafter"/>
</dbReference>
<dbReference type="GO" id="GO:0003844">
    <property type="term" value="F:1,4-alpha-glucan branching enzyme activity"/>
    <property type="evidence" value="ECO:0007669"/>
    <property type="project" value="UniProtKB-UniRule"/>
</dbReference>
<dbReference type="GO" id="GO:0043169">
    <property type="term" value="F:cation binding"/>
    <property type="evidence" value="ECO:0007669"/>
    <property type="project" value="InterPro"/>
</dbReference>
<dbReference type="GO" id="GO:0004553">
    <property type="term" value="F:hydrolase activity, hydrolyzing O-glycosyl compounds"/>
    <property type="evidence" value="ECO:0007669"/>
    <property type="project" value="InterPro"/>
</dbReference>
<dbReference type="GO" id="GO:0005978">
    <property type="term" value="P:glycogen biosynthetic process"/>
    <property type="evidence" value="ECO:0007669"/>
    <property type="project" value="UniProtKB-UniRule"/>
</dbReference>
<dbReference type="CDD" id="cd11322">
    <property type="entry name" value="AmyAc_Glg_BE"/>
    <property type="match status" value="1"/>
</dbReference>
<dbReference type="CDD" id="cd02855">
    <property type="entry name" value="E_set_GBE_prok_N"/>
    <property type="match status" value="1"/>
</dbReference>
<dbReference type="FunFam" id="2.60.40.10:FF:000169">
    <property type="entry name" value="1,4-alpha-glucan branching enzyme GlgB"/>
    <property type="match status" value="1"/>
</dbReference>
<dbReference type="FunFam" id="2.60.40.1180:FF:000002">
    <property type="entry name" value="1,4-alpha-glucan branching enzyme GlgB"/>
    <property type="match status" value="1"/>
</dbReference>
<dbReference type="FunFam" id="3.20.20.80:FF:000003">
    <property type="entry name" value="1,4-alpha-glucan branching enzyme GlgB"/>
    <property type="match status" value="1"/>
</dbReference>
<dbReference type="Gene3D" id="3.20.20.80">
    <property type="entry name" value="Glycosidases"/>
    <property type="match status" value="1"/>
</dbReference>
<dbReference type="Gene3D" id="2.60.40.1180">
    <property type="entry name" value="Golgi alpha-mannosidase II"/>
    <property type="match status" value="1"/>
</dbReference>
<dbReference type="Gene3D" id="2.60.40.10">
    <property type="entry name" value="Immunoglobulins"/>
    <property type="match status" value="2"/>
</dbReference>
<dbReference type="HAMAP" id="MF_00685">
    <property type="entry name" value="GlgB"/>
    <property type="match status" value="1"/>
</dbReference>
<dbReference type="InterPro" id="IPR006048">
    <property type="entry name" value="A-amylase/branching_C"/>
</dbReference>
<dbReference type="InterPro" id="IPR037439">
    <property type="entry name" value="Branching_enzy"/>
</dbReference>
<dbReference type="InterPro" id="IPR006407">
    <property type="entry name" value="GlgB"/>
</dbReference>
<dbReference type="InterPro" id="IPR054169">
    <property type="entry name" value="GlgB_N"/>
</dbReference>
<dbReference type="InterPro" id="IPR044143">
    <property type="entry name" value="GlgB_N_E_set_prok"/>
</dbReference>
<dbReference type="InterPro" id="IPR006047">
    <property type="entry name" value="Glyco_hydro_13_cat_dom"/>
</dbReference>
<dbReference type="InterPro" id="IPR004193">
    <property type="entry name" value="Glyco_hydro_13_N"/>
</dbReference>
<dbReference type="InterPro" id="IPR013780">
    <property type="entry name" value="Glyco_hydro_b"/>
</dbReference>
<dbReference type="InterPro" id="IPR017853">
    <property type="entry name" value="Glycoside_hydrolase_SF"/>
</dbReference>
<dbReference type="InterPro" id="IPR013783">
    <property type="entry name" value="Ig-like_fold"/>
</dbReference>
<dbReference type="InterPro" id="IPR014756">
    <property type="entry name" value="Ig_E-set"/>
</dbReference>
<dbReference type="NCBIfam" id="TIGR01515">
    <property type="entry name" value="branching_enzym"/>
    <property type="match status" value="1"/>
</dbReference>
<dbReference type="NCBIfam" id="NF003811">
    <property type="entry name" value="PRK05402.1"/>
    <property type="match status" value="1"/>
</dbReference>
<dbReference type="NCBIfam" id="NF008967">
    <property type="entry name" value="PRK12313.1"/>
    <property type="match status" value="1"/>
</dbReference>
<dbReference type="PANTHER" id="PTHR43651">
    <property type="entry name" value="1,4-ALPHA-GLUCAN-BRANCHING ENZYME"/>
    <property type="match status" value="1"/>
</dbReference>
<dbReference type="PANTHER" id="PTHR43651:SF3">
    <property type="entry name" value="1,4-ALPHA-GLUCAN-BRANCHING ENZYME"/>
    <property type="match status" value="1"/>
</dbReference>
<dbReference type="Pfam" id="PF00128">
    <property type="entry name" value="Alpha-amylase"/>
    <property type="match status" value="2"/>
</dbReference>
<dbReference type="Pfam" id="PF02806">
    <property type="entry name" value="Alpha-amylase_C"/>
    <property type="match status" value="1"/>
</dbReference>
<dbReference type="Pfam" id="PF02922">
    <property type="entry name" value="CBM_48"/>
    <property type="match status" value="1"/>
</dbReference>
<dbReference type="Pfam" id="PF22019">
    <property type="entry name" value="GlgB_N"/>
    <property type="match status" value="1"/>
</dbReference>
<dbReference type="PIRSF" id="PIRSF000463">
    <property type="entry name" value="GlgB"/>
    <property type="match status" value="1"/>
</dbReference>
<dbReference type="SMART" id="SM00642">
    <property type="entry name" value="Aamy"/>
    <property type="match status" value="1"/>
</dbReference>
<dbReference type="SUPFAM" id="SSF51445">
    <property type="entry name" value="(Trans)glycosidases"/>
    <property type="match status" value="1"/>
</dbReference>
<dbReference type="SUPFAM" id="SSF81296">
    <property type="entry name" value="E set domains"/>
    <property type="match status" value="2"/>
</dbReference>
<dbReference type="SUPFAM" id="SSF51011">
    <property type="entry name" value="Glycosyl hydrolase domain"/>
    <property type="match status" value="1"/>
</dbReference>
<gene>
    <name evidence="1" type="primary">glgB</name>
    <name type="ordered locus">PMN2A_0020</name>
</gene>
<name>GLGB_PROMT</name>
<organism>
    <name type="scientific">Prochlorococcus marinus (strain NATL2A)</name>
    <dbReference type="NCBI Taxonomy" id="59920"/>
    <lineage>
        <taxon>Bacteria</taxon>
        <taxon>Bacillati</taxon>
        <taxon>Cyanobacteriota</taxon>
        <taxon>Cyanophyceae</taxon>
        <taxon>Synechococcales</taxon>
        <taxon>Prochlorococcaceae</taxon>
        <taxon>Prochlorococcus</taxon>
    </lineage>
</organism>
<comment type="function">
    <text evidence="1">Catalyzes the formation of the alpha-1,6-glucosidic linkages in glycogen by scission of a 1,4-alpha-linked oligosaccharide from growing alpha-1,4-glucan chains and the subsequent attachment of the oligosaccharide to the alpha-1,6 position.</text>
</comment>
<comment type="catalytic activity">
    <reaction evidence="1">
        <text>Transfers a segment of a (1-&gt;4)-alpha-D-glucan chain to a primary hydroxy group in a similar glucan chain.</text>
        <dbReference type="EC" id="2.4.1.18"/>
    </reaction>
</comment>
<comment type="pathway">
    <text evidence="1">Glycan biosynthesis; glycogen biosynthesis.</text>
</comment>
<comment type="subunit">
    <text evidence="1">Monomer.</text>
</comment>
<comment type="similarity">
    <text evidence="1">Belongs to the glycosyl hydrolase 13 family. GlgB subfamily.</text>
</comment>
<keyword id="KW-0119">Carbohydrate metabolism</keyword>
<keyword id="KW-0320">Glycogen biosynthesis</keyword>
<keyword id="KW-0321">Glycogen metabolism</keyword>
<keyword id="KW-0328">Glycosyltransferase</keyword>
<keyword id="KW-1185">Reference proteome</keyword>
<keyword id="KW-0808">Transferase</keyword>
<sequence>MTVSILLDSLKDDGQRLSECRHESPFSILGPQPFKDKWIIRIWMPEASQVELVTQQTKIKLQNPNHEWIFEGVLEKDPGTDYQIKVNRGGIEHVQHDPWSFRKEWMGEIDRHLFAEGNHHHIWRKMGAHLTEIDKKKGVMFCLWAPHAKSVSVIGDLNSWDGRHHPMQKRLGGIWELFIPGLSEGDLYKYEIRTEKGHCYEKADPYGFQHEVRPAKSSVISKIDSFQWSDQSWISNRDNRDPLEQPISVYEMHLGSWMHASSDDPFINSNGEHRAPVPAADMKPGSRLLTYKELANKVIPYVKERGFTHIELMPISEHPFDGSWGYQVTGWYAPTSRFGSPDEFRAFVDSCHKEGIGIILDWVPGHFPKDQHGLAYFDGSHLYEHSDPRVGEHKEWGTLIFNYSRNEVRNFLVANLIFWFDQFHIDGIRVDAVASMLYKDYLRPEGEWIPNEDGGNENFEAVRFLQQANHVLFQHFPGALSIAEESTTWTGVTKPTDMDGLGFNLKWNMGWMHDMLDYFEIDPWFRQFNQNNITFSICYNFTENFMLALSHDEVVHGKSHLLHKMPGDDWQKYANTRALLAYMWTHPGKKTIFMGMEFGQRQEWNVWDDLQWDLLNYEPHKGIQKLVDDLNNLYKREPALWRNDFDEYGFQWIDCDDNKNSVISFMRREKTDGEWLVIVANFTPQNHSNYRIGVPVDGFYEEIFNTDASQYGGSNLGNMGGKSTDLYNIHGYENSIDLCLPPLSVLVLKHKSKKN</sequence>
<feature type="chain" id="PRO_0000260675" description="1,4-alpha-glucan branching enzyme GlgB">
    <location>
        <begin position="1"/>
        <end position="755"/>
    </location>
</feature>
<feature type="active site" description="Nucleophile" evidence="1">
    <location>
        <position position="431"/>
    </location>
</feature>
<feature type="active site" description="Proton donor" evidence="1">
    <location>
        <position position="484"/>
    </location>
</feature>
<reference key="1">
    <citation type="journal article" date="2007" name="PLoS Genet.">
        <title>Patterns and implications of gene gain and loss in the evolution of Prochlorococcus.</title>
        <authorList>
            <person name="Kettler G.C."/>
            <person name="Martiny A.C."/>
            <person name="Huang K."/>
            <person name="Zucker J."/>
            <person name="Coleman M.L."/>
            <person name="Rodrigue S."/>
            <person name="Chen F."/>
            <person name="Lapidus A."/>
            <person name="Ferriera S."/>
            <person name="Johnson J."/>
            <person name="Steglich C."/>
            <person name="Church G.M."/>
            <person name="Richardson P."/>
            <person name="Chisholm S.W."/>
        </authorList>
    </citation>
    <scope>NUCLEOTIDE SEQUENCE [LARGE SCALE GENOMIC DNA]</scope>
    <source>
        <strain>NATL2A</strain>
    </source>
</reference>
<proteinExistence type="inferred from homology"/>
<protein>
    <recommendedName>
        <fullName evidence="1">1,4-alpha-glucan branching enzyme GlgB</fullName>
        <ecNumber evidence="1">2.4.1.18</ecNumber>
    </recommendedName>
    <alternativeName>
        <fullName evidence="1">1,4-alpha-D-glucan:1,4-alpha-D-glucan 6-glucosyl-transferase</fullName>
    </alternativeName>
    <alternativeName>
        <fullName evidence="1">Alpha-(1-&gt;4)-glucan branching enzyme</fullName>
    </alternativeName>
    <alternativeName>
        <fullName evidence="1">Glycogen branching enzyme</fullName>
        <shortName evidence="1">BE</shortName>
    </alternativeName>
</protein>
<accession>Q46LW6</accession>